<protein>
    <recommendedName>
        <fullName>Protein gp45.2</fullName>
    </recommendedName>
    <alternativeName>
        <fullName>Gene product 45.2</fullName>
        <shortName>gp45.2</shortName>
    </alternativeName>
</protein>
<comment type="function">
    <text>May participate in replication-dependent transcriptional events during viral growth.</text>
</comment>
<dbReference type="EMBL" id="M15080">
    <property type="protein sequence ID" value="AAA32517.1"/>
    <property type="molecule type" value="Genomic_DNA"/>
</dbReference>
<dbReference type="EMBL" id="M10160">
    <property type="status" value="NOT_ANNOTATED_CDS"/>
    <property type="molecule type" value="Genomic_DNA"/>
</dbReference>
<dbReference type="EMBL" id="AF158101">
    <property type="protein sequence ID" value="AAD42471.1"/>
    <property type="molecule type" value="Genomic_DNA"/>
</dbReference>
<dbReference type="RefSeq" id="NP_049668.1">
    <property type="nucleotide sequence ID" value="NC_000866.4"/>
</dbReference>
<dbReference type="GeneID" id="1258576"/>
<dbReference type="KEGG" id="vg:1258576"/>
<dbReference type="OrthoDB" id="23113at10239"/>
<dbReference type="Proteomes" id="UP000009087">
    <property type="component" value="Segment"/>
</dbReference>
<dbReference type="InterPro" id="IPR035342">
    <property type="entry name" value="Gp45.2"/>
</dbReference>
<dbReference type="Pfam" id="PF17470">
    <property type="entry name" value="Gp45_2"/>
    <property type="match status" value="1"/>
</dbReference>
<keyword id="KW-1185">Reference proteome</keyword>
<reference key="1">
    <citation type="journal article" date="1987" name="J. Virol.">
        <title>Identification of two new bacteriophage T4 genes that may have roles in transcription and DNA replication.</title>
        <authorList>
            <person name="Hsu T."/>
            <person name="Wei R."/>
            <person name="Dawson M."/>
            <person name="Karam J.D."/>
        </authorList>
    </citation>
    <scope>NUCLEOTIDE SEQUENCE [GENOMIC DNA]</scope>
</reference>
<reference key="2">
    <citation type="journal article" date="2003" name="Microbiol. Mol. Biol. Rev.">
        <title>Bacteriophage T4 genome.</title>
        <authorList>
            <person name="Miller E.S."/>
            <person name="Kutter E."/>
            <person name="Mosig G."/>
            <person name="Arisaka F."/>
            <person name="Kunisawa T."/>
            <person name="Ruger W."/>
        </authorList>
    </citation>
    <scope>NUCLEOTIDE SEQUENCE [LARGE SCALE GENOMIC DNA]</scope>
</reference>
<proteinExistence type="predicted"/>
<organismHost>
    <name type="scientific">Escherichia coli</name>
    <dbReference type="NCBI Taxonomy" id="562"/>
</organismHost>
<accession>P07878</accession>
<organism>
    <name type="scientific">Enterobacteria phage T4</name>
    <name type="common">Bacteriophage T4</name>
    <dbReference type="NCBI Taxonomy" id="10665"/>
    <lineage>
        <taxon>Viruses</taxon>
        <taxon>Duplodnaviria</taxon>
        <taxon>Heunggongvirae</taxon>
        <taxon>Uroviricota</taxon>
        <taxon>Caudoviricetes</taxon>
        <taxon>Straboviridae</taxon>
        <taxon>Tevenvirinae</taxon>
        <taxon>Tequatrovirus</taxon>
    </lineage>
</organism>
<name>VG452_BPT4</name>
<feature type="chain" id="PRO_0000164990" description="Protein gp45.2">
    <location>
        <begin position="1"/>
        <end position="62"/>
    </location>
</feature>
<sequence>MEYSTGQHLLTIPEIKRYILRNNFSNEEHIVTESMLRNAFKAEYTKIMSNRNEAWTVTDYYD</sequence>
<gene>
    <name type="primary">45.2</name>
</gene>